<proteinExistence type="evidence at protein level"/>
<comment type="function">
    <text>Elicits the hypersensitive response (HR) in the plant upon infection. Harpin elicits HR in non-hosts and is also required for pathogenicity in host plants.</text>
</comment>
<comment type="subcellular location">
    <subcellularLocation>
        <location>Secreted</location>
    </subcellularLocation>
    <text>Via the HRP secretion pathway.</text>
</comment>
<comment type="similarity">
    <text evidence="2">Belongs to the harpin HrpN family.</text>
</comment>
<gene>
    <name type="primary">hrpN</name>
</gene>
<feature type="chain" id="PRO_0000084067" description="Harpin HrpN">
    <location>
        <begin position="1"/>
        <end position="403"/>
    </location>
</feature>
<feature type="region of interest" description="Disordered" evidence="1">
    <location>
        <begin position="113"/>
        <end position="157"/>
    </location>
</feature>
<feature type="region of interest" description="Disordered" evidence="1">
    <location>
        <begin position="173"/>
        <end position="195"/>
    </location>
</feature>
<feature type="compositionally biased region" description="Low complexity" evidence="1">
    <location>
        <begin position="113"/>
        <end position="129"/>
    </location>
</feature>
<feature type="compositionally biased region" description="Low complexity" evidence="1">
    <location>
        <begin position="137"/>
        <end position="156"/>
    </location>
</feature>
<feature type="compositionally biased region" description="Low complexity" evidence="1">
    <location>
        <begin position="174"/>
        <end position="187"/>
    </location>
</feature>
<accession>Q01099</accession>
<name>HRPN_ERWAM</name>
<sequence length="403" mass="39697">MSLNTSGLGASTMQISIGGAGGNNGLLGTSRQNAGLGGNSALGLGGGNQNDTVNQLAGLLTGMMMMMSMMGGGGLMGGGLGGGLGNGLGGSGGLGEGLSNALNDMLGGSLNTLGSKGGNNTTSTTNSPLDQALGINSTSQNDDSTSGTDSTSDSSDPMQQLLKMFSEIMQSLFGDGQDGTQGSSSGGKQPTEGEQNAYKKGVTDALSGLMGNGLSQLLGNGGLGGGQGGNAGTGLDGSSLGGKGLQNLSGPVDYQQLGNAVGTGIGMKAGIQALNDIGTHSDSSTRSFVNKGDRAMAKEIGQFMDQYPEVFGKPQYQKGPGQEVKTDDKSWAKALSKPDDDGMTPASMEQFNKAKGMIKSAMAGDTGNGNLQARGAGGSSLGIDAMMAGDAINNMALGKLGAA</sequence>
<reference key="1">
    <citation type="journal article" date="1992" name="Science">
        <title>Harpin, elicitor of the hypersensitive response produced by the plant pathogen Erwinia amylovora.</title>
        <authorList>
            <person name="Wei Z.-M."/>
            <person name="Laby R.J."/>
            <person name="Zumoff C.H."/>
            <person name="Bauer D.W."/>
            <person name="He S.Y."/>
            <person name="Collmer A."/>
            <person name="Beer S.V."/>
        </authorList>
    </citation>
    <scope>NUCLEOTIDE SEQUENCE [GENOMIC DNA]</scope>
    <scope>PROTEIN SEQUENCE OF 1-15</scope>
    <source>
        <strain>Ea321</strain>
    </source>
</reference>
<reference key="2">
    <citation type="submission" date="1999-03" db="EMBL/GenBank/DDBJ databases">
        <authorList>
            <person name="Laby R.J."/>
            <person name="Kim J.F."/>
            <person name="Beer S.V."/>
        </authorList>
    </citation>
    <scope>SEQUENCE REVISION</scope>
</reference>
<keyword id="KW-0903">Direct protein sequencing</keyword>
<keyword id="KW-0928">Hypersensitive response elicitation</keyword>
<keyword id="KW-0964">Secreted</keyword>
<protein>
    <recommendedName>
        <fullName>Harpin HrpN</fullName>
    </recommendedName>
    <alternativeName>
        <fullName>Harpin-Ea</fullName>
    </alternativeName>
</protein>
<organism>
    <name type="scientific">Erwinia amylovora</name>
    <name type="common">Fire blight bacteria</name>
    <dbReference type="NCBI Taxonomy" id="552"/>
    <lineage>
        <taxon>Bacteria</taxon>
        <taxon>Pseudomonadati</taxon>
        <taxon>Pseudomonadota</taxon>
        <taxon>Gammaproteobacteria</taxon>
        <taxon>Enterobacterales</taxon>
        <taxon>Erwiniaceae</taxon>
        <taxon>Erwinia</taxon>
    </lineage>
</organism>
<dbReference type="EMBL" id="M92994">
    <property type="protein sequence ID" value="AAC31644.2"/>
    <property type="molecule type" value="Genomic_DNA"/>
</dbReference>
<dbReference type="PIR" id="T08471">
    <property type="entry name" value="T08471"/>
</dbReference>
<dbReference type="RefSeq" id="WP_004155369.1">
    <property type="nucleotide sequence ID" value="NZ_RQKG01000002.1"/>
</dbReference>
<dbReference type="GeneID" id="97604888"/>
<dbReference type="PATRIC" id="fig|665029.3.peg.571"/>
<dbReference type="PHI-base" id="PHI:2467"/>
<dbReference type="PHI-base" id="PHI:2475"/>
<dbReference type="GO" id="GO:0005576">
    <property type="term" value="C:extracellular region"/>
    <property type="evidence" value="ECO:0007669"/>
    <property type="project" value="UniProtKB-SubCell"/>
</dbReference>
<dbReference type="GO" id="GO:0052040">
    <property type="term" value="P:symbiont-mediated perturbation of host programmed cell death"/>
    <property type="evidence" value="ECO:0007669"/>
    <property type="project" value="UniProtKB-KW"/>
</dbReference>
<dbReference type="InterPro" id="IPR006961">
    <property type="entry name" value="HrpN/Z"/>
</dbReference>
<dbReference type="Pfam" id="PF04877">
    <property type="entry name" value="Harpin"/>
    <property type="match status" value="1"/>
</dbReference>
<evidence type="ECO:0000256" key="1">
    <source>
        <dbReference type="SAM" id="MobiDB-lite"/>
    </source>
</evidence>
<evidence type="ECO:0000305" key="2"/>